<protein>
    <recommendedName>
        <fullName evidence="1">Small ribosomal subunit protein uS5</fullName>
    </recommendedName>
    <alternativeName>
        <fullName evidence="2">30S ribosomal protein S5</fullName>
    </alternativeName>
</protein>
<feature type="chain" id="PRO_1000214321" description="Small ribosomal subunit protein uS5">
    <location>
        <begin position="1"/>
        <end position="171"/>
    </location>
</feature>
<feature type="domain" description="S5 DRBM" evidence="1">
    <location>
        <begin position="15"/>
        <end position="78"/>
    </location>
</feature>
<accession>B1VAD1</accession>
<keyword id="KW-1185">Reference proteome</keyword>
<keyword id="KW-0687">Ribonucleoprotein</keyword>
<keyword id="KW-0689">Ribosomal protein</keyword>
<keyword id="KW-0694">RNA-binding</keyword>
<keyword id="KW-0699">rRNA-binding</keyword>
<comment type="function">
    <text evidence="1">With S4 and S12 plays an important role in translational accuracy.</text>
</comment>
<comment type="function">
    <text evidence="1">Located at the back of the 30S subunit body where it stabilizes the conformation of the head with respect to the body.</text>
</comment>
<comment type="subunit">
    <text evidence="1">Part of the 30S ribosomal subunit. Contacts proteins S4 and S8.</text>
</comment>
<comment type="domain">
    <text>The N-terminal domain interacts with the head of the 30S subunit; the C-terminal domain interacts with the body and contacts protein S4. The interaction surface between S4 and S5 is involved in control of translational fidelity.</text>
</comment>
<comment type="similarity">
    <text evidence="1">Belongs to the universal ribosomal protein uS5 family.</text>
</comment>
<evidence type="ECO:0000255" key="1">
    <source>
        <dbReference type="HAMAP-Rule" id="MF_01307"/>
    </source>
</evidence>
<evidence type="ECO:0000305" key="2"/>
<name>RS5_PHYAS</name>
<dbReference type="EMBL" id="AM422018">
    <property type="protein sequence ID" value="CAM11904.1"/>
    <property type="molecule type" value="Genomic_DNA"/>
</dbReference>
<dbReference type="SMR" id="B1VAD1"/>
<dbReference type="STRING" id="59748.PA0570"/>
<dbReference type="KEGG" id="pal:PA0570"/>
<dbReference type="eggNOG" id="COG0098">
    <property type="taxonomic scope" value="Bacteria"/>
</dbReference>
<dbReference type="Proteomes" id="UP000008323">
    <property type="component" value="Chromosome"/>
</dbReference>
<dbReference type="GO" id="GO:0015935">
    <property type="term" value="C:small ribosomal subunit"/>
    <property type="evidence" value="ECO:0007669"/>
    <property type="project" value="InterPro"/>
</dbReference>
<dbReference type="GO" id="GO:0019843">
    <property type="term" value="F:rRNA binding"/>
    <property type="evidence" value="ECO:0007669"/>
    <property type="project" value="UniProtKB-UniRule"/>
</dbReference>
<dbReference type="GO" id="GO:0003735">
    <property type="term" value="F:structural constituent of ribosome"/>
    <property type="evidence" value="ECO:0007669"/>
    <property type="project" value="InterPro"/>
</dbReference>
<dbReference type="GO" id="GO:0006412">
    <property type="term" value="P:translation"/>
    <property type="evidence" value="ECO:0007669"/>
    <property type="project" value="UniProtKB-UniRule"/>
</dbReference>
<dbReference type="FunFam" id="3.30.160.20:FF:000001">
    <property type="entry name" value="30S ribosomal protein S5"/>
    <property type="match status" value="1"/>
</dbReference>
<dbReference type="FunFam" id="3.30.230.10:FF:000002">
    <property type="entry name" value="30S ribosomal protein S5"/>
    <property type="match status" value="1"/>
</dbReference>
<dbReference type="Gene3D" id="3.30.160.20">
    <property type="match status" value="1"/>
</dbReference>
<dbReference type="Gene3D" id="3.30.230.10">
    <property type="match status" value="1"/>
</dbReference>
<dbReference type="HAMAP" id="MF_01307_B">
    <property type="entry name" value="Ribosomal_uS5_B"/>
    <property type="match status" value="1"/>
</dbReference>
<dbReference type="InterPro" id="IPR020568">
    <property type="entry name" value="Ribosomal_Su5_D2-typ_SF"/>
</dbReference>
<dbReference type="InterPro" id="IPR000851">
    <property type="entry name" value="Ribosomal_uS5"/>
</dbReference>
<dbReference type="InterPro" id="IPR005712">
    <property type="entry name" value="Ribosomal_uS5_bac-type"/>
</dbReference>
<dbReference type="InterPro" id="IPR005324">
    <property type="entry name" value="Ribosomal_uS5_C"/>
</dbReference>
<dbReference type="InterPro" id="IPR013810">
    <property type="entry name" value="Ribosomal_uS5_N"/>
</dbReference>
<dbReference type="InterPro" id="IPR014721">
    <property type="entry name" value="Ribsml_uS5_D2-typ_fold_subgr"/>
</dbReference>
<dbReference type="NCBIfam" id="TIGR01021">
    <property type="entry name" value="rpsE_bact"/>
    <property type="match status" value="1"/>
</dbReference>
<dbReference type="PANTHER" id="PTHR48277">
    <property type="entry name" value="MITOCHONDRIAL RIBOSOMAL PROTEIN S5"/>
    <property type="match status" value="1"/>
</dbReference>
<dbReference type="PANTHER" id="PTHR48277:SF1">
    <property type="entry name" value="MITOCHONDRIAL RIBOSOMAL PROTEIN S5"/>
    <property type="match status" value="1"/>
</dbReference>
<dbReference type="Pfam" id="PF00333">
    <property type="entry name" value="Ribosomal_S5"/>
    <property type="match status" value="1"/>
</dbReference>
<dbReference type="Pfam" id="PF03719">
    <property type="entry name" value="Ribosomal_S5_C"/>
    <property type="match status" value="1"/>
</dbReference>
<dbReference type="SUPFAM" id="SSF54768">
    <property type="entry name" value="dsRNA-binding domain-like"/>
    <property type="match status" value="1"/>
</dbReference>
<dbReference type="SUPFAM" id="SSF54211">
    <property type="entry name" value="Ribosomal protein S5 domain 2-like"/>
    <property type="match status" value="1"/>
</dbReference>
<dbReference type="PROSITE" id="PS50881">
    <property type="entry name" value="S5_DSRBD"/>
    <property type="match status" value="1"/>
</dbReference>
<reference key="1">
    <citation type="journal article" date="2008" name="J. Bacteriol.">
        <title>Comparative genome analysis of 'Candidatus Phytoplasma australiense' (subgroup tuf-Australia I; rp-A) and 'Ca. Phytoplasma asteris' strains OY-M and AY-WB.</title>
        <authorList>
            <person name="Tran-Nguyen L.T."/>
            <person name="Kube M."/>
            <person name="Schneider B."/>
            <person name="Reinhardt R."/>
            <person name="Gibb K.S."/>
        </authorList>
    </citation>
    <scope>NUCLEOTIDE SEQUENCE [LARGE SCALE GENOMIC DNA]</scope>
</reference>
<sequence length="171" mass="18623">MKTIKKEFVKKTSPYEEKVVKIKRITKVVKGGRRFRFSALVVVGNKKDQIGFATAKAQEIVDAIKKAVEKAKKQLIRIPIVGTTIPHDTIGHFGASKFLLRPASKGTGIVAGGAAARTVLELVGISDVLTKTFGSRTSINVIRAVMDGLKNLRTKEEVAKLRGLTLAKNEQ</sequence>
<proteinExistence type="inferred from homology"/>
<organism>
    <name type="scientific">Phytoplasma australiense</name>
    <dbReference type="NCBI Taxonomy" id="59748"/>
    <lineage>
        <taxon>Bacteria</taxon>
        <taxon>Bacillati</taxon>
        <taxon>Mycoplasmatota</taxon>
        <taxon>Mollicutes</taxon>
        <taxon>Acholeplasmatales</taxon>
        <taxon>Acholeplasmataceae</taxon>
        <taxon>Candidatus Phytoplasma</taxon>
        <taxon>16SrXII (Stolbur group)</taxon>
    </lineage>
</organism>
<gene>
    <name evidence="1" type="primary">rpsE</name>
    <name type="ordered locus">PA0570</name>
</gene>